<comment type="similarity">
    <text evidence="1">Belongs to the bacterial ribosomal protein bL36 family.</text>
</comment>
<protein>
    <recommendedName>
        <fullName evidence="1">Large ribosomal subunit protein bL36</fullName>
    </recommendedName>
    <alternativeName>
        <fullName evidence="2">50S ribosomal protein L36</fullName>
    </alternativeName>
</protein>
<sequence length="38" mass="4421">MKVRPSVKPICEYCKVIRRNGRVMVICPANPKHKQRQG</sequence>
<reference key="1">
    <citation type="journal article" date="2007" name="J. Bacteriol.">
        <title>The complete genome sequence of the lactic acid bacterial paradigm Lactococcus lactis subsp. cremoris MG1363.</title>
        <authorList>
            <person name="Wegmann U."/>
            <person name="O'Connell-Motherway M."/>
            <person name="Zomer A."/>
            <person name="Buist G."/>
            <person name="Shearman C."/>
            <person name="Canchaya C."/>
            <person name="Ventura M."/>
            <person name="Goesmann A."/>
            <person name="Gasson M.J."/>
            <person name="Kuipers O.P."/>
            <person name="van Sinderen D."/>
            <person name="Kok J."/>
        </authorList>
    </citation>
    <scope>NUCLEOTIDE SEQUENCE [LARGE SCALE GENOMIC DNA]</scope>
    <source>
        <strain>MG1363</strain>
    </source>
</reference>
<evidence type="ECO:0000255" key="1">
    <source>
        <dbReference type="HAMAP-Rule" id="MF_00251"/>
    </source>
</evidence>
<evidence type="ECO:0000305" key="2"/>
<organism>
    <name type="scientific">Lactococcus lactis subsp. cremoris (strain MG1363)</name>
    <dbReference type="NCBI Taxonomy" id="416870"/>
    <lineage>
        <taxon>Bacteria</taxon>
        <taxon>Bacillati</taxon>
        <taxon>Bacillota</taxon>
        <taxon>Bacilli</taxon>
        <taxon>Lactobacillales</taxon>
        <taxon>Streptococcaceae</taxon>
        <taxon>Lactococcus</taxon>
        <taxon>Lactococcus cremoris subsp. cremoris</taxon>
    </lineage>
</organism>
<name>RL36_LACLM</name>
<gene>
    <name evidence="1" type="primary">rpmJ</name>
    <name type="ordered locus">llmg_2357</name>
</gene>
<proteinExistence type="evidence at protein level"/>
<dbReference type="EMBL" id="AM406671">
    <property type="protein sequence ID" value="CAL98921.1"/>
    <property type="molecule type" value="Genomic_DNA"/>
</dbReference>
<dbReference type="RefSeq" id="WP_001808836.1">
    <property type="nucleotide sequence ID" value="NZ_WJVF01000005.1"/>
</dbReference>
<dbReference type="PDB" id="5MYJ">
    <property type="method" value="EM"/>
    <property type="resolution" value="5.60 A"/>
    <property type="chains" value="B8=1-38"/>
</dbReference>
<dbReference type="PDBsum" id="5MYJ"/>
<dbReference type="EMDB" id="EMD-3581"/>
<dbReference type="SMR" id="A2RNN0"/>
<dbReference type="STRING" id="416870.llmg_2357"/>
<dbReference type="GeneID" id="93964224"/>
<dbReference type="KEGG" id="llm:llmg_2357"/>
<dbReference type="eggNOG" id="COG0257">
    <property type="taxonomic scope" value="Bacteria"/>
</dbReference>
<dbReference type="HOGENOM" id="CLU_135723_6_2_9"/>
<dbReference type="OrthoDB" id="9802520at2"/>
<dbReference type="PhylomeDB" id="A2RNN0"/>
<dbReference type="Proteomes" id="UP000000364">
    <property type="component" value="Chromosome"/>
</dbReference>
<dbReference type="GO" id="GO:0005737">
    <property type="term" value="C:cytoplasm"/>
    <property type="evidence" value="ECO:0007669"/>
    <property type="project" value="UniProtKB-ARBA"/>
</dbReference>
<dbReference type="GO" id="GO:1990904">
    <property type="term" value="C:ribonucleoprotein complex"/>
    <property type="evidence" value="ECO:0007669"/>
    <property type="project" value="UniProtKB-KW"/>
</dbReference>
<dbReference type="GO" id="GO:0005840">
    <property type="term" value="C:ribosome"/>
    <property type="evidence" value="ECO:0007669"/>
    <property type="project" value="UniProtKB-KW"/>
</dbReference>
<dbReference type="GO" id="GO:0003735">
    <property type="term" value="F:structural constituent of ribosome"/>
    <property type="evidence" value="ECO:0007669"/>
    <property type="project" value="InterPro"/>
</dbReference>
<dbReference type="GO" id="GO:0006412">
    <property type="term" value="P:translation"/>
    <property type="evidence" value="ECO:0007669"/>
    <property type="project" value="UniProtKB-UniRule"/>
</dbReference>
<dbReference type="HAMAP" id="MF_00251">
    <property type="entry name" value="Ribosomal_bL36"/>
    <property type="match status" value="1"/>
</dbReference>
<dbReference type="InterPro" id="IPR000473">
    <property type="entry name" value="Ribosomal_bL36"/>
</dbReference>
<dbReference type="InterPro" id="IPR035977">
    <property type="entry name" value="Ribosomal_bL36_sp"/>
</dbReference>
<dbReference type="NCBIfam" id="TIGR01022">
    <property type="entry name" value="rpmJ_bact"/>
    <property type="match status" value="1"/>
</dbReference>
<dbReference type="PANTHER" id="PTHR42888">
    <property type="entry name" value="50S RIBOSOMAL PROTEIN L36, CHLOROPLASTIC"/>
    <property type="match status" value="1"/>
</dbReference>
<dbReference type="PANTHER" id="PTHR42888:SF1">
    <property type="entry name" value="LARGE RIBOSOMAL SUBUNIT PROTEIN BL36C"/>
    <property type="match status" value="1"/>
</dbReference>
<dbReference type="Pfam" id="PF00444">
    <property type="entry name" value="Ribosomal_L36"/>
    <property type="match status" value="1"/>
</dbReference>
<dbReference type="SUPFAM" id="SSF57840">
    <property type="entry name" value="Ribosomal protein L36"/>
    <property type="match status" value="1"/>
</dbReference>
<dbReference type="PROSITE" id="PS00828">
    <property type="entry name" value="RIBOSOMAL_L36"/>
    <property type="match status" value="1"/>
</dbReference>
<keyword id="KW-0002">3D-structure</keyword>
<keyword id="KW-0687">Ribonucleoprotein</keyword>
<keyword id="KW-0689">Ribosomal protein</keyword>
<feature type="chain" id="PRO_0000302228" description="Large ribosomal subunit protein bL36">
    <location>
        <begin position="1"/>
        <end position="38"/>
    </location>
</feature>
<accession>A2RNN0</accession>